<organism>
    <name type="scientific">Acaryochloris marina (strain MBIC 11017)</name>
    <dbReference type="NCBI Taxonomy" id="329726"/>
    <lineage>
        <taxon>Bacteria</taxon>
        <taxon>Bacillati</taxon>
        <taxon>Cyanobacteriota</taxon>
        <taxon>Cyanophyceae</taxon>
        <taxon>Acaryochloridales</taxon>
        <taxon>Acaryochloridaceae</taxon>
        <taxon>Acaryochloris</taxon>
    </lineage>
</organism>
<keyword id="KW-0472">Membrane</keyword>
<keyword id="KW-1185">Reference proteome</keyword>
<keyword id="KW-0793">Thylakoid</keyword>
<keyword id="KW-0812">Transmembrane</keyword>
<keyword id="KW-1133">Transmembrane helix</keyword>
<feature type="chain" id="PRO_0000362165" description="Protein PsbN">
    <location>
        <begin position="1"/>
        <end position="46"/>
    </location>
</feature>
<feature type="transmembrane region" description="Helical" evidence="1">
    <location>
        <begin position="10"/>
        <end position="30"/>
    </location>
</feature>
<name>PSBN_ACAM1</name>
<evidence type="ECO:0000255" key="1">
    <source>
        <dbReference type="HAMAP-Rule" id="MF_00293"/>
    </source>
</evidence>
<comment type="function">
    <text evidence="1">May play a role in photosystem I and II biogenesis.</text>
</comment>
<comment type="subcellular location">
    <subcellularLocation>
        <location evidence="1">Cellular thylakoid membrane</location>
        <topology evidence="1">Single-pass membrane protein</topology>
    </subcellularLocation>
</comment>
<comment type="similarity">
    <text evidence="1">Belongs to the PsbN family.</text>
</comment>
<comment type="caution">
    <text evidence="1">Originally thought to be a component of PSII; based on experiments in Synechocystis, N.tabacum and barley, and its absence from PSII in T.elongatus and T.vulcanus, this is probably not true.</text>
</comment>
<gene>
    <name evidence="1" type="primary">psbN</name>
    <name type="ordered locus">AM1_5511</name>
</gene>
<reference key="1">
    <citation type="journal article" date="2008" name="Proc. Natl. Acad. Sci. U.S.A.">
        <title>Niche adaptation and genome expansion in the chlorophyll d-producing cyanobacterium Acaryochloris marina.</title>
        <authorList>
            <person name="Swingley W.D."/>
            <person name="Chen M."/>
            <person name="Cheung P.C."/>
            <person name="Conrad A.L."/>
            <person name="Dejesa L.C."/>
            <person name="Hao J."/>
            <person name="Honchak B.M."/>
            <person name="Karbach L.E."/>
            <person name="Kurdoglu A."/>
            <person name="Lahiri S."/>
            <person name="Mastrian S.D."/>
            <person name="Miyashita H."/>
            <person name="Page L."/>
            <person name="Ramakrishna P."/>
            <person name="Satoh S."/>
            <person name="Sattley W.M."/>
            <person name="Shimada Y."/>
            <person name="Taylor H.L."/>
            <person name="Tomo T."/>
            <person name="Tsuchiya T."/>
            <person name="Wang Z.T."/>
            <person name="Raymond J."/>
            <person name="Mimuro M."/>
            <person name="Blankenship R.E."/>
            <person name="Touchman J.W."/>
        </authorList>
    </citation>
    <scope>NUCLEOTIDE SEQUENCE [LARGE SCALE GENOMIC DNA]</scope>
    <source>
        <strain>MBIC 11017</strain>
    </source>
</reference>
<proteinExistence type="inferred from homology"/>
<sequence length="46" mass="4997">MQFSDPATVLIITILAVTIAFTAVSLYTAFGPPSKQLADPFEEHED</sequence>
<accession>B0CDZ1</accession>
<protein>
    <recommendedName>
        <fullName evidence="1">Protein PsbN</fullName>
    </recommendedName>
</protein>
<dbReference type="EMBL" id="CP000828">
    <property type="protein sequence ID" value="ABW30465.1"/>
    <property type="molecule type" value="Genomic_DNA"/>
</dbReference>
<dbReference type="RefSeq" id="WP_010477325.1">
    <property type="nucleotide sequence ID" value="NC_009925.1"/>
</dbReference>
<dbReference type="SMR" id="B0CDZ1"/>
<dbReference type="STRING" id="329726.AM1_5511"/>
<dbReference type="KEGG" id="amr:AM1_5511"/>
<dbReference type="eggNOG" id="ENOG50339MH">
    <property type="taxonomic scope" value="Bacteria"/>
</dbReference>
<dbReference type="HOGENOM" id="CLU_205504_0_0_3"/>
<dbReference type="Proteomes" id="UP000000268">
    <property type="component" value="Chromosome"/>
</dbReference>
<dbReference type="GO" id="GO:0031676">
    <property type="term" value="C:plasma membrane-derived thylakoid membrane"/>
    <property type="evidence" value="ECO:0007669"/>
    <property type="project" value="UniProtKB-SubCell"/>
</dbReference>
<dbReference type="GO" id="GO:0015979">
    <property type="term" value="P:photosynthesis"/>
    <property type="evidence" value="ECO:0007669"/>
    <property type="project" value="InterPro"/>
</dbReference>
<dbReference type="HAMAP" id="MF_00293">
    <property type="entry name" value="PSII_PsbN"/>
    <property type="match status" value="1"/>
</dbReference>
<dbReference type="InterPro" id="IPR003398">
    <property type="entry name" value="PSII_PsbN"/>
</dbReference>
<dbReference type="NCBIfam" id="NF009650">
    <property type="entry name" value="PRK13183.1"/>
    <property type="match status" value="1"/>
</dbReference>
<dbReference type="PANTHER" id="PTHR35326">
    <property type="entry name" value="PROTEIN PSBN"/>
    <property type="match status" value="1"/>
</dbReference>
<dbReference type="PANTHER" id="PTHR35326:SF3">
    <property type="entry name" value="PROTEIN PSBN"/>
    <property type="match status" value="1"/>
</dbReference>
<dbReference type="Pfam" id="PF02468">
    <property type="entry name" value="PsbN"/>
    <property type="match status" value="1"/>
</dbReference>